<reference key="1">
    <citation type="journal article" date="2007" name="Microbiology">
        <title>Comparative analysis of the Corynebacterium glutamicum group and complete genome sequence of strain R.</title>
        <authorList>
            <person name="Yukawa H."/>
            <person name="Omumasaba C.A."/>
            <person name="Nonaka H."/>
            <person name="Kos P."/>
            <person name="Okai N."/>
            <person name="Suzuki N."/>
            <person name="Suda M."/>
            <person name="Tsuge Y."/>
            <person name="Watanabe J."/>
            <person name="Ikeda Y."/>
            <person name="Vertes A.A."/>
            <person name="Inui M."/>
        </authorList>
    </citation>
    <scope>NUCLEOTIDE SEQUENCE [LARGE SCALE GENOMIC DNA]</scope>
    <source>
        <strain>R</strain>
    </source>
</reference>
<accession>A4QHG9</accession>
<gene>
    <name evidence="1" type="primary">pyrE</name>
    <name type="ordered locus">cgR_2670</name>
</gene>
<keyword id="KW-0328">Glycosyltransferase</keyword>
<keyword id="KW-0460">Magnesium</keyword>
<keyword id="KW-0665">Pyrimidine biosynthesis</keyword>
<keyword id="KW-0808">Transferase</keyword>
<evidence type="ECO:0000255" key="1">
    <source>
        <dbReference type="HAMAP-Rule" id="MF_01208"/>
    </source>
</evidence>
<name>PYRE_CORGB</name>
<protein>
    <recommendedName>
        <fullName evidence="1">Orotate phosphoribosyltransferase</fullName>
        <shortName evidence="1">OPRT</shortName>
        <shortName evidence="1">OPRTase</shortName>
        <ecNumber evidence="1">2.4.2.10</ecNumber>
    </recommendedName>
</protein>
<dbReference type="EC" id="2.4.2.10" evidence="1"/>
<dbReference type="EMBL" id="AP009044">
    <property type="protein sequence ID" value="BAF55685.1"/>
    <property type="molecule type" value="Genomic_DNA"/>
</dbReference>
<dbReference type="RefSeq" id="WP_003853617.1">
    <property type="nucleotide sequence ID" value="NC_009342.1"/>
</dbReference>
<dbReference type="SMR" id="A4QHG9"/>
<dbReference type="KEGG" id="cgt:cgR_2670"/>
<dbReference type="HOGENOM" id="CLU_074878_2_1_11"/>
<dbReference type="PhylomeDB" id="A4QHG9"/>
<dbReference type="UniPathway" id="UPA00070">
    <property type="reaction ID" value="UER00119"/>
</dbReference>
<dbReference type="Proteomes" id="UP000006698">
    <property type="component" value="Chromosome"/>
</dbReference>
<dbReference type="GO" id="GO:0000287">
    <property type="term" value="F:magnesium ion binding"/>
    <property type="evidence" value="ECO:0007669"/>
    <property type="project" value="UniProtKB-UniRule"/>
</dbReference>
<dbReference type="GO" id="GO:0004588">
    <property type="term" value="F:orotate phosphoribosyltransferase activity"/>
    <property type="evidence" value="ECO:0007669"/>
    <property type="project" value="UniProtKB-UniRule"/>
</dbReference>
<dbReference type="GO" id="GO:0044205">
    <property type="term" value="P:'de novo' UMP biosynthetic process"/>
    <property type="evidence" value="ECO:0007669"/>
    <property type="project" value="UniProtKB-UniRule"/>
</dbReference>
<dbReference type="GO" id="GO:0019856">
    <property type="term" value="P:pyrimidine nucleobase biosynthetic process"/>
    <property type="evidence" value="ECO:0007669"/>
    <property type="project" value="TreeGrafter"/>
</dbReference>
<dbReference type="CDD" id="cd06223">
    <property type="entry name" value="PRTases_typeI"/>
    <property type="match status" value="1"/>
</dbReference>
<dbReference type="FunFam" id="3.40.50.2020:FF:000029">
    <property type="entry name" value="Orotate phosphoribosyltransferase"/>
    <property type="match status" value="1"/>
</dbReference>
<dbReference type="Gene3D" id="3.40.50.2020">
    <property type="match status" value="1"/>
</dbReference>
<dbReference type="HAMAP" id="MF_01208">
    <property type="entry name" value="PyrE"/>
    <property type="match status" value="1"/>
</dbReference>
<dbReference type="InterPro" id="IPR023031">
    <property type="entry name" value="OPRT"/>
</dbReference>
<dbReference type="InterPro" id="IPR004467">
    <property type="entry name" value="Or_phspho_trans_dom"/>
</dbReference>
<dbReference type="InterPro" id="IPR000836">
    <property type="entry name" value="PRibTrfase_dom"/>
</dbReference>
<dbReference type="InterPro" id="IPR029057">
    <property type="entry name" value="PRTase-like"/>
</dbReference>
<dbReference type="NCBIfam" id="TIGR00336">
    <property type="entry name" value="pyrE"/>
    <property type="match status" value="1"/>
</dbReference>
<dbReference type="PANTHER" id="PTHR19278">
    <property type="entry name" value="OROTATE PHOSPHORIBOSYLTRANSFERASE"/>
    <property type="match status" value="1"/>
</dbReference>
<dbReference type="PANTHER" id="PTHR19278:SF9">
    <property type="entry name" value="URIDINE 5'-MONOPHOSPHATE SYNTHASE"/>
    <property type="match status" value="1"/>
</dbReference>
<dbReference type="Pfam" id="PF00156">
    <property type="entry name" value="Pribosyltran"/>
    <property type="match status" value="1"/>
</dbReference>
<dbReference type="SUPFAM" id="SSF53271">
    <property type="entry name" value="PRTase-like"/>
    <property type="match status" value="1"/>
</dbReference>
<proteinExistence type="inferred from homology"/>
<feature type="chain" id="PRO_1000066224" description="Orotate phosphoribosyltransferase">
    <location>
        <begin position="1"/>
        <end position="184"/>
    </location>
</feature>
<feature type="binding site" evidence="1">
    <location>
        <position position="99"/>
    </location>
    <ligand>
        <name>5-phospho-alpha-D-ribose 1-diphosphate</name>
        <dbReference type="ChEBI" id="CHEBI:58017"/>
        <note>ligand shared between dimeric partners</note>
    </ligand>
</feature>
<feature type="binding site" description="in other chain" evidence="1">
    <location>
        <position position="100"/>
    </location>
    <ligand>
        <name>5-phospho-alpha-D-ribose 1-diphosphate</name>
        <dbReference type="ChEBI" id="CHEBI:58017"/>
        <note>ligand shared between dimeric partners</note>
    </ligand>
</feature>
<feature type="binding site" evidence="1">
    <location>
        <position position="103"/>
    </location>
    <ligand>
        <name>5-phospho-alpha-D-ribose 1-diphosphate</name>
        <dbReference type="ChEBI" id="CHEBI:58017"/>
        <note>ligand shared between dimeric partners</note>
    </ligand>
</feature>
<feature type="binding site" evidence="1">
    <location>
        <position position="105"/>
    </location>
    <ligand>
        <name>5-phospho-alpha-D-ribose 1-diphosphate</name>
        <dbReference type="ChEBI" id="CHEBI:58017"/>
        <note>ligand shared between dimeric partners</note>
    </ligand>
</feature>
<feature type="binding site" description="in other chain" evidence="1">
    <location>
        <begin position="125"/>
        <end position="133"/>
    </location>
    <ligand>
        <name>5-phospho-alpha-D-ribose 1-diphosphate</name>
        <dbReference type="ChEBI" id="CHEBI:58017"/>
        <note>ligand shared between dimeric partners</note>
    </ligand>
</feature>
<feature type="binding site" evidence="1">
    <location>
        <position position="129"/>
    </location>
    <ligand>
        <name>orotate</name>
        <dbReference type="ChEBI" id="CHEBI:30839"/>
    </ligand>
</feature>
<feature type="binding site" evidence="1">
    <location>
        <position position="157"/>
    </location>
    <ligand>
        <name>orotate</name>
        <dbReference type="ChEBI" id="CHEBI:30839"/>
    </ligand>
</feature>
<sequence length="184" mass="19473">MSSNSINVEARAELAELIKELAVVHGEVTLSSGKKADYYIDVRRATLHARASRLIGQLLREATADWDYDAVGGLTLGADPVATAIMHADGRDINAFVVRKEAKKHGMQRRIEGPDLTGKKVLVVEDTTTTGNSPLTAVAALREAGIEVVGVATVVDRATGADEVIAAEGLPYRSLLGLSDLGLN</sequence>
<organism>
    <name type="scientific">Corynebacterium glutamicum (strain R)</name>
    <dbReference type="NCBI Taxonomy" id="340322"/>
    <lineage>
        <taxon>Bacteria</taxon>
        <taxon>Bacillati</taxon>
        <taxon>Actinomycetota</taxon>
        <taxon>Actinomycetes</taxon>
        <taxon>Mycobacteriales</taxon>
        <taxon>Corynebacteriaceae</taxon>
        <taxon>Corynebacterium</taxon>
    </lineage>
</organism>
<comment type="function">
    <text evidence="1">Catalyzes the transfer of a ribosyl phosphate group from 5-phosphoribose 1-diphosphate to orotate, leading to the formation of orotidine monophosphate (OMP).</text>
</comment>
<comment type="catalytic activity">
    <reaction evidence="1">
        <text>orotidine 5'-phosphate + diphosphate = orotate + 5-phospho-alpha-D-ribose 1-diphosphate</text>
        <dbReference type="Rhea" id="RHEA:10380"/>
        <dbReference type="ChEBI" id="CHEBI:30839"/>
        <dbReference type="ChEBI" id="CHEBI:33019"/>
        <dbReference type="ChEBI" id="CHEBI:57538"/>
        <dbReference type="ChEBI" id="CHEBI:58017"/>
        <dbReference type="EC" id="2.4.2.10"/>
    </reaction>
</comment>
<comment type="cofactor">
    <cofactor evidence="1">
        <name>Mg(2+)</name>
        <dbReference type="ChEBI" id="CHEBI:18420"/>
    </cofactor>
</comment>
<comment type="pathway">
    <text evidence="1">Pyrimidine metabolism; UMP biosynthesis via de novo pathway; UMP from orotate: step 1/2.</text>
</comment>
<comment type="subunit">
    <text evidence="1">Homodimer.</text>
</comment>
<comment type="similarity">
    <text evidence="1">Belongs to the purine/pyrimidine phosphoribosyltransferase family. PyrE subfamily.</text>
</comment>